<proteinExistence type="evidence at protein level"/>
<organism>
    <name type="scientific">Trypanosoma brucei brucei</name>
    <dbReference type="NCBI Taxonomy" id="5702"/>
    <lineage>
        <taxon>Eukaryota</taxon>
        <taxon>Discoba</taxon>
        <taxon>Euglenozoa</taxon>
        <taxon>Kinetoplastea</taxon>
        <taxon>Metakinetoplastina</taxon>
        <taxon>Trypanosomatida</taxon>
        <taxon>Trypanosomatidae</taxon>
        <taxon>Trypanosoma</taxon>
    </lineage>
</organism>
<feature type="chain" id="PRO_0000114828" description="Ubiquitin">
    <location>
        <begin position="1"/>
        <end position="76"/>
    </location>
</feature>
<feature type="chain" id="PRO_0000138770" description="Large ribosomal subunit protein eL40">
    <location>
        <begin position="77"/>
        <end position="128"/>
    </location>
</feature>
<feature type="domain" description="Ubiquitin-like" evidence="2">
    <location>
        <begin position="1"/>
        <end position="76"/>
    </location>
</feature>
<feature type="cross-link" description="Glycyl lysine isopeptide (Lys-Gly) (interchain with G-Cter in ubiquitin)" evidence="1">
    <location>
        <position position="48"/>
    </location>
</feature>
<feature type="cross-link" description="Glycyl lysine isopeptide (Gly-Lys) (interchain with K-? in acceptor proteins)" evidence="2">
    <location>
        <position position="76"/>
    </location>
</feature>
<feature type="sequence conflict" description="In Ref. 3; CAA32691." evidence="3" ref="3">
    <original>V</original>
    <variation>L</variation>
    <location>
        <position position="77"/>
    </location>
</feature>
<evidence type="ECO:0000250" key="1"/>
<evidence type="ECO:0000255" key="2">
    <source>
        <dbReference type="PROSITE-ProRule" id="PRU00214"/>
    </source>
</evidence>
<evidence type="ECO:0000305" key="3"/>
<protein>
    <recommendedName>
        <fullName evidence="3">Ubiquitin-ribosomal protein eL40 fusion protein</fullName>
    </recommendedName>
    <component>
        <recommendedName>
            <fullName>Ubiquitin</fullName>
        </recommendedName>
    </component>
    <component>
        <recommendedName>
            <fullName evidence="3">Large ribosomal subunit protein eL40</fullName>
        </recommendedName>
        <alternativeName>
            <fullName>60S ribosomal protein L40</fullName>
        </alternativeName>
        <alternativeName>
            <fullName>CEP52</fullName>
        </alternativeName>
    </component>
</protein>
<comment type="function">
    <molecule>Ubiquitin</molecule>
    <text evidence="1">Exists either covalently attached to another protein, or free (unanchored). When covalently bound, it is conjugated to target proteins via an isopeptide bond either as a monomer (monoubiquitin), a polymer linked via different Lys residues of the ubiquitin (polyubiquitin chains) or a linear polymer linked via the initiator Met of the ubiquitin (linear polyubiquitin chains). Polyubiquitin chains, when attached to a target protein, have different functions depending on the Lys residue of the ubiquitin that is linked: Lys-48-linked is involved in protein degradation via the proteasome. Linear polymer chains formed via attachment by the initiator Met lead to cell signaling. Ubiquitin is usually conjugated to Lys residues of target proteins, however, in rare cases, conjugation to Cys or Ser residues has been observed. When polyubiquitin is free (unanchored-polyubiquitin), it also has distinct roles, such as in activation of protein kinases, and in signaling (By similarity).</text>
</comment>
<comment type="function">
    <molecule>Large ribosomal subunit protein eL40</molecule>
    <text evidence="1">Component of the 60S subunit of the ribosome.</text>
</comment>
<comment type="subunit">
    <molecule>Large ribosomal subunit protein eL40</molecule>
    <text evidence="1">Part of the 60S ribosomal subunit.</text>
</comment>
<comment type="subcellular location">
    <molecule>Ubiquitin</molecule>
    <subcellularLocation>
        <location evidence="1">Cytoplasm</location>
    </subcellularLocation>
    <subcellularLocation>
        <location evidence="1">Nucleus</location>
    </subcellularLocation>
</comment>
<comment type="subcellular location">
    <molecule>Large ribosomal subunit protein eL40</molecule>
    <subcellularLocation>
        <location evidence="1">Cytoplasm</location>
    </subcellularLocation>
</comment>
<comment type="similarity">
    <text evidence="3">In the N-terminal section; belongs to the ubiquitin family.</text>
</comment>
<comment type="similarity">
    <text evidence="3">In the C-terminal section; belongs to the eukaryotic ribosomal protein eL40 family.</text>
</comment>
<keyword id="KW-0002">3D-structure</keyword>
<keyword id="KW-0963">Cytoplasm</keyword>
<keyword id="KW-1017">Isopeptide bond</keyword>
<keyword id="KW-0539">Nucleus</keyword>
<keyword id="KW-0687">Ribonucleoprotein</keyword>
<keyword id="KW-0689">Ribosomal protein</keyword>
<keyword id="KW-0832">Ubl conjugation</keyword>
<sequence>MQIFVKTLTGKTIALEVEASDTIENVKAKIQDKEGIPPDQQRLIFAGKQLEEGRTLADYNIQKESTLHLVLRLRGGVMEPTLEALAKKYNWEKKVCRRCYARLPVRATNCRKKGCGHCSNLRMKKKLR</sequence>
<accession>P21899</accession>
<accession>P15174</accession>
<dbReference type="EMBL" id="X54641">
    <property type="protein sequence ID" value="CAA38453.1"/>
    <property type="molecule type" value="mRNA"/>
</dbReference>
<dbReference type="EMBL" id="X54642">
    <property type="protein sequence ID" value="CAA38454.1"/>
    <property type="molecule type" value="mRNA"/>
</dbReference>
<dbReference type="EMBL" id="X56511">
    <property type="protein sequence ID" value="CAA39863.1"/>
    <property type="molecule type" value="Genomic_DNA"/>
</dbReference>
<dbReference type="EMBL" id="X56511">
    <property type="protein sequence ID" value="CAA39864.1"/>
    <property type="molecule type" value="Genomic_DNA"/>
</dbReference>
<dbReference type="EMBL" id="X14554">
    <property type="protein sequence ID" value="CAA32691.1"/>
    <property type="molecule type" value="Genomic_DNA"/>
</dbReference>
<dbReference type="PIR" id="A44981">
    <property type="entry name" value="UQUT"/>
</dbReference>
<dbReference type="PIR" id="C48111">
    <property type="entry name" value="C48111"/>
</dbReference>
<dbReference type="PDB" id="4V8M">
    <property type="method" value="EM"/>
    <property type="resolution" value="5.57 A"/>
    <property type="chains" value="Bs=1-128"/>
</dbReference>
<dbReference type="PDB" id="8OVA">
    <property type="method" value="EM"/>
    <property type="resolution" value="2.47 A"/>
    <property type="chains" value="Bs=1-128"/>
</dbReference>
<dbReference type="PDB" id="8OVE">
    <property type="method" value="EM"/>
    <property type="resolution" value="2.60 A"/>
    <property type="chains" value="Bs=1-128"/>
</dbReference>
<dbReference type="PDBsum" id="4V8M"/>
<dbReference type="PDBsum" id="8OVA"/>
<dbReference type="PDBsum" id="8OVE"/>
<dbReference type="EMDB" id="EMD-17208"/>
<dbReference type="EMDB" id="EMD-17212"/>
<dbReference type="SMR" id="P21899"/>
<dbReference type="IntAct" id="P21899">
    <property type="interactions" value="1"/>
</dbReference>
<dbReference type="SwissPalm" id="P21899"/>
<dbReference type="GO" id="GO:0005737">
    <property type="term" value="C:cytoplasm"/>
    <property type="evidence" value="ECO:0007669"/>
    <property type="project" value="UniProtKB-SubCell"/>
</dbReference>
<dbReference type="GO" id="GO:0005634">
    <property type="term" value="C:nucleus"/>
    <property type="evidence" value="ECO:0007669"/>
    <property type="project" value="UniProtKB-SubCell"/>
</dbReference>
<dbReference type="GO" id="GO:1990904">
    <property type="term" value="C:ribonucleoprotein complex"/>
    <property type="evidence" value="ECO:0007669"/>
    <property type="project" value="UniProtKB-KW"/>
</dbReference>
<dbReference type="GO" id="GO:0005840">
    <property type="term" value="C:ribosome"/>
    <property type="evidence" value="ECO:0007669"/>
    <property type="project" value="UniProtKB-KW"/>
</dbReference>
<dbReference type="GO" id="GO:0003735">
    <property type="term" value="F:structural constituent of ribosome"/>
    <property type="evidence" value="ECO:0007669"/>
    <property type="project" value="InterPro"/>
</dbReference>
<dbReference type="GO" id="GO:0006412">
    <property type="term" value="P:translation"/>
    <property type="evidence" value="ECO:0007669"/>
    <property type="project" value="InterPro"/>
</dbReference>
<dbReference type="CDD" id="cd01803">
    <property type="entry name" value="Ubl_ubiquitin"/>
    <property type="match status" value="1"/>
</dbReference>
<dbReference type="FunFam" id="3.10.20.90:FF:000014">
    <property type="entry name" value="Ubiquitin-60S ribosomal L40 fusion"/>
    <property type="match status" value="1"/>
</dbReference>
<dbReference type="FunFam" id="4.10.1060.50:FF:000001">
    <property type="entry name" value="ubiquitin-60S ribosomal protein L40"/>
    <property type="match status" value="1"/>
</dbReference>
<dbReference type="Gene3D" id="4.10.1060.50">
    <property type="match status" value="1"/>
</dbReference>
<dbReference type="Gene3D" id="3.10.20.90">
    <property type="entry name" value="Phosphatidylinositol 3-kinase Catalytic Subunit, Chain A, domain 1"/>
    <property type="match status" value="1"/>
</dbReference>
<dbReference type="InterPro" id="IPR001975">
    <property type="entry name" value="Ribosomal_eL40_dom"/>
</dbReference>
<dbReference type="InterPro" id="IPR038587">
    <property type="entry name" value="Ribosomal_eL40_sf"/>
</dbReference>
<dbReference type="InterPro" id="IPR011332">
    <property type="entry name" value="Ribosomal_zn-bd"/>
</dbReference>
<dbReference type="InterPro" id="IPR000626">
    <property type="entry name" value="Ubiquitin-like_dom"/>
</dbReference>
<dbReference type="InterPro" id="IPR029071">
    <property type="entry name" value="Ubiquitin-like_domsf"/>
</dbReference>
<dbReference type="InterPro" id="IPR019954">
    <property type="entry name" value="Ubiquitin_CS"/>
</dbReference>
<dbReference type="InterPro" id="IPR019956">
    <property type="entry name" value="Ubiquitin_dom"/>
</dbReference>
<dbReference type="InterPro" id="IPR050158">
    <property type="entry name" value="Ubiquitin_ubiquitin-like"/>
</dbReference>
<dbReference type="PANTHER" id="PTHR10666">
    <property type="entry name" value="UBIQUITIN"/>
    <property type="match status" value="1"/>
</dbReference>
<dbReference type="Pfam" id="PF01020">
    <property type="entry name" value="Ribosomal_L40e"/>
    <property type="match status" value="1"/>
</dbReference>
<dbReference type="Pfam" id="PF00240">
    <property type="entry name" value="ubiquitin"/>
    <property type="match status" value="1"/>
</dbReference>
<dbReference type="PRINTS" id="PR00348">
    <property type="entry name" value="UBIQUITIN"/>
</dbReference>
<dbReference type="SMART" id="SM01377">
    <property type="entry name" value="Ribosomal_L40e"/>
    <property type="match status" value="1"/>
</dbReference>
<dbReference type="SMART" id="SM00213">
    <property type="entry name" value="UBQ"/>
    <property type="match status" value="1"/>
</dbReference>
<dbReference type="SUPFAM" id="SSF54236">
    <property type="entry name" value="Ubiquitin-like"/>
    <property type="match status" value="1"/>
</dbReference>
<dbReference type="SUPFAM" id="SSF57829">
    <property type="entry name" value="Zn-binding ribosomal proteins"/>
    <property type="match status" value="1"/>
</dbReference>
<dbReference type="PROSITE" id="PS00299">
    <property type="entry name" value="UBIQUITIN_1"/>
    <property type="match status" value="1"/>
</dbReference>
<dbReference type="PROSITE" id="PS50053">
    <property type="entry name" value="UBIQUITIN_2"/>
    <property type="match status" value="1"/>
</dbReference>
<name>RL40_TRYBB</name>
<reference key="1">
    <citation type="journal article" date="1990" name="Nucleic Acids Res.">
        <title>Ubiquitin-EP52 fusion protein homologs from Trypanosoma brucei.</title>
        <authorList>
            <person name="Wong S."/>
            <person name="Morales T.H."/>
            <person name="Campbell D.A."/>
        </authorList>
    </citation>
    <scope>NUCLEOTIDE SEQUENCE [MRNA]</scope>
    <source>
        <strain>427</strain>
    </source>
</reference>
<reference key="2">
    <citation type="journal article" date="1993" name="Mol. Cell. Biol.">
        <title>Genomic and transcriptional linkage of the genes for calmodulin, EF-hand 5 protein, and ubiquitin extension protein 52 in Trypanosoma brucei.</title>
        <authorList>
            <person name="Wong S."/>
            <person name="Morales T.H."/>
            <person name="Neigel J.E."/>
            <person name="Campbell D.A."/>
        </authorList>
    </citation>
    <scope>NUCLEOTIDE SEQUENCE [GENOMIC DNA]</scope>
    <source>
        <strain>427</strain>
    </source>
</reference>
<reference key="3">
    <citation type="journal article" date="1989" name="Mol. Biochem. Parasitol.">
        <title>A polyubiquitin gene from Trypanosoma brucei.</title>
        <authorList>
            <person name="Wong S."/>
            <person name="Campbell D.A."/>
        </authorList>
    </citation>
    <scope>NUCLEOTIDE SEQUENCE [GENOMIC DNA] OF 1-77</scope>
</reference>